<gene>
    <name type="primary">ND4L</name>
</gene>
<name>NU4LM_CERCA</name>
<feature type="chain" id="PRO_0000118405" description="NADH-ubiquinone oxidoreductase chain 4L">
    <location>
        <begin position="1"/>
        <end position="96"/>
    </location>
</feature>
<feature type="transmembrane region" description="Helical" evidence="2">
    <location>
        <begin position="2"/>
        <end position="22"/>
    </location>
</feature>
<feature type="transmembrane region" description="Helical" evidence="2">
    <location>
        <begin position="28"/>
        <end position="48"/>
    </location>
</feature>
<feature type="transmembrane region" description="Helical" evidence="2">
    <location>
        <begin position="58"/>
        <end position="78"/>
    </location>
</feature>
<geneLocation type="mitochondrion"/>
<keyword id="KW-0249">Electron transport</keyword>
<keyword id="KW-0472">Membrane</keyword>
<keyword id="KW-0496">Mitochondrion</keyword>
<keyword id="KW-0520">NAD</keyword>
<keyword id="KW-0679">Respiratory chain</keyword>
<keyword id="KW-1278">Translocase</keyword>
<keyword id="KW-0812">Transmembrane</keyword>
<keyword id="KW-1133">Transmembrane helix</keyword>
<keyword id="KW-0813">Transport</keyword>
<keyword id="KW-0830">Ubiquinone</keyword>
<evidence type="ECO:0000250" key="1"/>
<evidence type="ECO:0000255" key="2"/>
<evidence type="ECO:0000305" key="3"/>
<accession>Q34049</accession>
<sequence>MLMMFYWSLPCFLFLMGVFVFVSNRKHLLSMLLSLEYIVLNLFFLLYIYLNLMEYLSFLGMMFLTFSVCEGALGLSIMVSMIRTHGNDYFQSFNVL</sequence>
<organism>
    <name type="scientific">Ceratitis capitata</name>
    <name type="common">Mediterranean fruit fly</name>
    <name type="synonym">Tephritis capitata</name>
    <dbReference type="NCBI Taxonomy" id="7213"/>
    <lineage>
        <taxon>Eukaryota</taxon>
        <taxon>Metazoa</taxon>
        <taxon>Ecdysozoa</taxon>
        <taxon>Arthropoda</taxon>
        <taxon>Hexapoda</taxon>
        <taxon>Insecta</taxon>
        <taxon>Pterygota</taxon>
        <taxon>Neoptera</taxon>
        <taxon>Endopterygota</taxon>
        <taxon>Diptera</taxon>
        <taxon>Brachycera</taxon>
        <taxon>Muscomorpha</taxon>
        <taxon>Tephritoidea</taxon>
        <taxon>Tephritidae</taxon>
        <taxon>Ceratitis</taxon>
        <taxon>Ceratitis</taxon>
    </lineage>
</organism>
<dbReference type="EC" id="7.1.1.2"/>
<dbReference type="EMBL" id="U12925">
    <property type="protein sequence ID" value="AAA85798.1"/>
    <property type="molecule type" value="Genomic_DNA"/>
</dbReference>
<dbReference type="SMR" id="Q34049"/>
<dbReference type="OrthoDB" id="6146597at2759"/>
<dbReference type="GO" id="GO:0031966">
    <property type="term" value="C:mitochondrial membrane"/>
    <property type="evidence" value="ECO:0007669"/>
    <property type="project" value="UniProtKB-SubCell"/>
</dbReference>
<dbReference type="GO" id="GO:0030964">
    <property type="term" value="C:NADH dehydrogenase complex"/>
    <property type="evidence" value="ECO:0007669"/>
    <property type="project" value="TreeGrafter"/>
</dbReference>
<dbReference type="GO" id="GO:0008137">
    <property type="term" value="F:NADH dehydrogenase (ubiquinone) activity"/>
    <property type="evidence" value="ECO:0007669"/>
    <property type="project" value="UniProtKB-EC"/>
</dbReference>
<dbReference type="GO" id="GO:0042773">
    <property type="term" value="P:ATP synthesis coupled electron transport"/>
    <property type="evidence" value="ECO:0007669"/>
    <property type="project" value="InterPro"/>
</dbReference>
<dbReference type="FunFam" id="1.10.287.3510:FF:000003">
    <property type="entry name" value="NADH-ubiquinone oxidoreductase chain 4L"/>
    <property type="match status" value="1"/>
</dbReference>
<dbReference type="Gene3D" id="1.10.287.3510">
    <property type="match status" value="1"/>
</dbReference>
<dbReference type="InterPro" id="IPR001133">
    <property type="entry name" value="NADH_UbQ_OxRdtase_chain4L/K"/>
</dbReference>
<dbReference type="InterPro" id="IPR039428">
    <property type="entry name" value="NUOK/Mnh_C1-like"/>
</dbReference>
<dbReference type="PANTHER" id="PTHR11434:SF0">
    <property type="entry name" value="NADH-UBIQUINONE OXIDOREDUCTASE CHAIN 4L"/>
    <property type="match status" value="1"/>
</dbReference>
<dbReference type="PANTHER" id="PTHR11434">
    <property type="entry name" value="NADH-UBIQUINONE OXIDOREDUCTASE SUBUNIT ND4L"/>
    <property type="match status" value="1"/>
</dbReference>
<dbReference type="Pfam" id="PF00420">
    <property type="entry name" value="Oxidored_q2"/>
    <property type="match status" value="1"/>
</dbReference>
<protein>
    <recommendedName>
        <fullName>NADH-ubiquinone oxidoreductase chain 4L</fullName>
        <ecNumber>7.1.1.2</ecNumber>
    </recommendedName>
    <alternativeName>
        <fullName>NADH dehydrogenase subunit 4L</fullName>
    </alternativeName>
</protein>
<proteinExistence type="inferred from homology"/>
<reference key="1">
    <citation type="journal article" date="1995" name="Insect Mol. Biol.">
        <title>Analysis of mitochondrial DNA and development of PCR-based diagnostic molecular markers for Mediterranean fruit fly (Ceratitis capitata) populations.</title>
        <authorList>
            <person name="Gasparich G.E."/>
            <person name="Sheppard W.S."/>
            <person name="Han H.Y."/>
            <person name="McPheron B.A."/>
            <person name="Steck G.J."/>
        </authorList>
    </citation>
    <scope>NUCLEOTIDE SEQUENCE [GENOMIC DNA]</scope>
    <source>
        <strain>Guatemala laboratory colony</strain>
    </source>
</reference>
<comment type="function">
    <text evidence="1">Core subunit of the mitochondrial membrane respiratory chain NADH dehydrogenase (Complex I) that is believed to belong to the minimal assembly required for catalysis. Complex I functions in the transfer of electrons from NADH to the respiratory chain. The immediate electron acceptor for the enzyme is believed to be ubiquinone (By similarity).</text>
</comment>
<comment type="catalytic activity">
    <reaction>
        <text>a ubiquinone + NADH + 5 H(+)(in) = a ubiquinol + NAD(+) + 4 H(+)(out)</text>
        <dbReference type="Rhea" id="RHEA:29091"/>
        <dbReference type="Rhea" id="RHEA-COMP:9565"/>
        <dbReference type="Rhea" id="RHEA-COMP:9566"/>
        <dbReference type="ChEBI" id="CHEBI:15378"/>
        <dbReference type="ChEBI" id="CHEBI:16389"/>
        <dbReference type="ChEBI" id="CHEBI:17976"/>
        <dbReference type="ChEBI" id="CHEBI:57540"/>
        <dbReference type="ChEBI" id="CHEBI:57945"/>
        <dbReference type="EC" id="7.1.1.2"/>
    </reaction>
</comment>
<comment type="subcellular location">
    <subcellularLocation>
        <location evidence="1">Mitochondrion membrane</location>
        <topology evidence="1">Multi-pass membrane protein</topology>
    </subcellularLocation>
</comment>
<comment type="similarity">
    <text evidence="3">Belongs to the complex I subunit 4L family.</text>
</comment>